<protein>
    <recommendedName>
        <fullName evidence="1">3-isopropylmalate dehydratase small subunit</fullName>
        <ecNumber evidence="1">4.2.1.33</ecNumber>
    </recommendedName>
    <alternativeName>
        <fullName evidence="1">Alpha-IPM isomerase</fullName>
        <shortName evidence="1">IPMI</shortName>
    </alternativeName>
    <alternativeName>
        <fullName evidence="1">Isopropylmalate isomerase</fullName>
    </alternativeName>
</protein>
<reference key="1">
    <citation type="journal article" date="2012" name="BMC Genomics">
        <title>Comparative genomics and transcriptomics of lineages I, II, and III strains of Listeria monocytogenes.</title>
        <authorList>
            <person name="Hain T."/>
            <person name="Ghai R."/>
            <person name="Billion A."/>
            <person name="Kuenne C.T."/>
            <person name="Steinweg C."/>
            <person name="Izar B."/>
            <person name="Mohamed W."/>
            <person name="Mraheil M."/>
            <person name="Domann E."/>
            <person name="Schaffrath S."/>
            <person name="Karst U."/>
            <person name="Goesmann A."/>
            <person name="Oehm S."/>
            <person name="Puhler A."/>
            <person name="Merkl R."/>
            <person name="Vorwerk S."/>
            <person name="Glaser P."/>
            <person name="Garrido P."/>
            <person name="Rusniok C."/>
            <person name="Buchrieser C."/>
            <person name="Goebel W."/>
            <person name="Chakraborty T."/>
        </authorList>
    </citation>
    <scope>NUCLEOTIDE SEQUENCE [LARGE SCALE GENOMIC DNA]</scope>
    <source>
        <strain>CLIP80459</strain>
    </source>
</reference>
<organism>
    <name type="scientific">Listeria monocytogenes serotype 4b (strain CLIP80459)</name>
    <dbReference type="NCBI Taxonomy" id="568819"/>
    <lineage>
        <taxon>Bacteria</taxon>
        <taxon>Bacillati</taxon>
        <taxon>Bacillota</taxon>
        <taxon>Bacilli</taxon>
        <taxon>Bacillales</taxon>
        <taxon>Listeriaceae</taxon>
        <taxon>Listeria</taxon>
    </lineage>
</organism>
<proteinExistence type="inferred from homology"/>
<keyword id="KW-0028">Amino-acid biosynthesis</keyword>
<keyword id="KW-0100">Branched-chain amino acid biosynthesis</keyword>
<keyword id="KW-0432">Leucine biosynthesis</keyword>
<keyword id="KW-0456">Lyase</keyword>
<accession>C1KWT4</accession>
<dbReference type="EC" id="4.2.1.33" evidence="1"/>
<dbReference type="EMBL" id="FM242711">
    <property type="protein sequence ID" value="CAS05759.1"/>
    <property type="molecule type" value="Genomic_DNA"/>
</dbReference>
<dbReference type="RefSeq" id="WP_003727975.1">
    <property type="nucleotide sequence ID" value="NC_012488.1"/>
</dbReference>
<dbReference type="SMR" id="C1KWT4"/>
<dbReference type="KEGG" id="lmc:Lm4b_02002"/>
<dbReference type="HOGENOM" id="CLU_081378_0_3_9"/>
<dbReference type="UniPathway" id="UPA00048">
    <property type="reaction ID" value="UER00071"/>
</dbReference>
<dbReference type="GO" id="GO:0009316">
    <property type="term" value="C:3-isopropylmalate dehydratase complex"/>
    <property type="evidence" value="ECO:0007669"/>
    <property type="project" value="InterPro"/>
</dbReference>
<dbReference type="GO" id="GO:0003861">
    <property type="term" value="F:3-isopropylmalate dehydratase activity"/>
    <property type="evidence" value="ECO:0007669"/>
    <property type="project" value="UniProtKB-UniRule"/>
</dbReference>
<dbReference type="GO" id="GO:0009098">
    <property type="term" value="P:L-leucine biosynthetic process"/>
    <property type="evidence" value="ECO:0007669"/>
    <property type="project" value="UniProtKB-UniRule"/>
</dbReference>
<dbReference type="CDD" id="cd01577">
    <property type="entry name" value="IPMI_Swivel"/>
    <property type="match status" value="1"/>
</dbReference>
<dbReference type="FunFam" id="3.20.19.10:FF:000003">
    <property type="entry name" value="3-isopropylmalate dehydratase small subunit"/>
    <property type="match status" value="1"/>
</dbReference>
<dbReference type="Gene3D" id="3.20.19.10">
    <property type="entry name" value="Aconitase, domain 4"/>
    <property type="match status" value="1"/>
</dbReference>
<dbReference type="HAMAP" id="MF_01031">
    <property type="entry name" value="LeuD_type1"/>
    <property type="match status" value="1"/>
</dbReference>
<dbReference type="InterPro" id="IPR004431">
    <property type="entry name" value="3-IsopropMal_deHydase_ssu"/>
</dbReference>
<dbReference type="InterPro" id="IPR015928">
    <property type="entry name" value="Aconitase/3IPM_dehydase_swvl"/>
</dbReference>
<dbReference type="InterPro" id="IPR000573">
    <property type="entry name" value="AconitaseA/IPMdHydase_ssu_swvl"/>
</dbReference>
<dbReference type="InterPro" id="IPR033940">
    <property type="entry name" value="IPMI_Swivel"/>
</dbReference>
<dbReference type="InterPro" id="IPR050075">
    <property type="entry name" value="LeuD"/>
</dbReference>
<dbReference type="NCBIfam" id="TIGR00171">
    <property type="entry name" value="leuD"/>
    <property type="match status" value="1"/>
</dbReference>
<dbReference type="NCBIfam" id="NF002458">
    <property type="entry name" value="PRK01641.1"/>
    <property type="match status" value="1"/>
</dbReference>
<dbReference type="PANTHER" id="PTHR43345:SF5">
    <property type="entry name" value="3-ISOPROPYLMALATE DEHYDRATASE SMALL SUBUNIT"/>
    <property type="match status" value="1"/>
</dbReference>
<dbReference type="PANTHER" id="PTHR43345">
    <property type="entry name" value="3-ISOPROPYLMALATE DEHYDRATASE SMALL SUBUNIT 2-RELATED-RELATED"/>
    <property type="match status" value="1"/>
</dbReference>
<dbReference type="Pfam" id="PF00694">
    <property type="entry name" value="Aconitase_C"/>
    <property type="match status" value="1"/>
</dbReference>
<dbReference type="SUPFAM" id="SSF52016">
    <property type="entry name" value="LeuD/IlvD-like"/>
    <property type="match status" value="1"/>
</dbReference>
<name>LEUD_LISMC</name>
<evidence type="ECO:0000255" key="1">
    <source>
        <dbReference type="HAMAP-Rule" id="MF_01031"/>
    </source>
</evidence>
<comment type="function">
    <text evidence="1">Catalyzes the isomerization between 2-isopropylmalate and 3-isopropylmalate, via the formation of 2-isopropylmaleate.</text>
</comment>
<comment type="catalytic activity">
    <reaction evidence="1">
        <text>(2R,3S)-3-isopropylmalate = (2S)-2-isopropylmalate</text>
        <dbReference type="Rhea" id="RHEA:32287"/>
        <dbReference type="ChEBI" id="CHEBI:1178"/>
        <dbReference type="ChEBI" id="CHEBI:35121"/>
        <dbReference type="EC" id="4.2.1.33"/>
    </reaction>
</comment>
<comment type="pathway">
    <text evidence="1">Amino-acid biosynthesis; L-leucine biosynthesis; L-leucine from 3-methyl-2-oxobutanoate: step 2/4.</text>
</comment>
<comment type="subunit">
    <text evidence="1">Heterodimer of LeuC and LeuD.</text>
</comment>
<comment type="similarity">
    <text evidence="1">Belongs to the LeuD family. LeuD type 1 subfamily.</text>
</comment>
<gene>
    <name evidence="1" type="primary">leuD</name>
    <name type="ordered locus">Lm4b_02002</name>
</gene>
<feature type="chain" id="PRO_1000213352" description="3-isopropylmalate dehydratase small subunit">
    <location>
        <begin position="1"/>
        <end position="193"/>
    </location>
</feature>
<sequence length="193" mass="21942">MEEIKVHIGKTVALMNDNIDTDQIIPKSFLKRIERTGFGEFLFDSWRYLPNRKPNPDFPLNAPDRQEATILITGDNFGCGSSREHAAWALLDYRFRVIIAGSYSDIFYMNCTKNGVLPIVLPREAREKLAKIAADENVTIDLPNQQVISSVGTYPFEIDATWKNKFINGLDDIAITFEHIDAIKAYEQKVDSI</sequence>